<name>VATD1_DROME</name>
<keyword id="KW-0375">Hydrogen ion transport</keyword>
<keyword id="KW-0406">Ion transport</keyword>
<keyword id="KW-1185">Reference proteome</keyword>
<keyword id="KW-0813">Transport</keyword>
<organism>
    <name type="scientific">Drosophila melanogaster</name>
    <name type="common">Fruit fly</name>
    <dbReference type="NCBI Taxonomy" id="7227"/>
    <lineage>
        <taxon>Eukaryota</taxon>
        <taxon>Metazoa</taxon>
        <taxon>Ecdysozoa</taxon>
        <taxon>Arthropoda</taxon>
        <taxon>Hexapoda</taxon>
        <taxon>Insecta</taxon>
        <taxon>Pterygota</taxon>
        <taxon>Neoptera</taxon>
        <taxon>Endopterygota</taxon>
        <taxon>Diptera</taxon>
        <taxon>Brachycera</taxon>
        <taxon>Muscomorpha</taxon>
        <taxon>Ephydroidea</taxon>
        <taxon>Drosophilidae</taxon>
        <taxon>Drosophila</taxon>
        <taxon>Sophophora</taxon>
    </lineage>
</organism>
<gene>
    <name type="primary">Vha36-1</name>
    <name type="synonym">Vha36</name>
    <name type="ORF">CG8186</name>
</gene>
<sequence length="246" mass="27627">MSGKDRLPIFPSRGAQMLMKARLAGAQKGHGLLKKKADALQMRFRLILGKIIETKTLMGDVMKEAAFSLAEAKFTSGDINQVVLQNVTKAQIKIRTKKDNVAGVTLPVFESYQDGSDTYELAGLARGGQQLAKLKKNYQSAVKLLVELASLQTSFVTLDEVIKITNRRVNAIEHVIIPRIDRTLAYIISELDELEREEFYRLKKIQDKKREARIKADAKKAELLQQGIDVRQQANILDEGDDDVLF</sequence>
<feature type="chain" id="PRO_0000144236" description="V-type proton ATPase subunit D 1">
    <location>
        <begin position="1"/>
        <end position="246"/>
    </location>
</feature>
<evidence type="ECO:0000250" key="1">
    <source>
        <dbReference type="UniProtKB" id="P39942"/>
    </source>
</evidence>
<evidence type="ECO:0000250" key="2">
    <source>
        <dbReference type="UniProtKB" id="Q9Y5K8"/>
    </source>
</evidence>
<evidence type="ECO:0000305" key="3"/>
<dbReference type="EMBL" id="AF218238">
    <property type="protein sequence ID" value="AAG13186.1"/>
    <property type="molecule type" value="mRNA"/>
</dbReference>
<dbReference type="EMBL" id="AE013599">
    <property type="protein sequence ID" value="AAF58126.1"/>
    <property type="molecule type" value="Genomic_DNA"/>
</dbReference>
<dbReference type="EMBL" id="AY069116">
    <property type="protein sequence ID" value="AAL39261.1"/>
    <property type="molecule type" value="mRNA"/>
</dbReference>
<dbReference type="RefSeq" id="NP_651987.1">
    <property type="nucleotide sequence ID" value="NM_143730.3"/>
</dbReference>
<dbReference type="SMR" id="Q9V7D2"/>
<dbReference type="BioGRID" id="69214">
    <property type="interactions" value="17"/>
</dbReference>
<dbReference type="DIP" id="DIP-20787N"/>
<dbReference type="FunCoup" id="Q9V7D2">
    <property type="interactions" value="1900"/>
</dbReference>
<dbReference type="IntAct" id="Q9V7D2">
    <property type="interactions" value="20"/>
</dbReference>
<dbReference type="STRING" id="7227.FBpp0086468"/>
<dbReference type="PaxDb" id="7227-FBpp0086468"/>
<dbReference type="DNASU" id="44702"/>
<dbReference type="EnsemblMetazoa" id="FBtr0087335">
    <property type="protein sequence ID" value="FBpp0086468"/>
    <property type="gene ID" value="FBgn0022097"/>
</dbReference>
<dbReference type="GeneID" id="44702"/>
<dbReference type="KEGG" id="dme:Dmel_CG8186"/>
<dbReference type="AGR" id="FB:FBgn0022097"/>
<dbReference type="CTD" id="44702"/>
<dbReference type="FlyBase" id="FBgn0022097">
    <property type="gene designation" value="Vha36-1"/>
</dbReference>
<dbReference type="VEuPathDB" id="VectorBase:FBgn0022097"/>
<dbReference type="eggNOG" id="KOG1647">
    <property type="taxonomic scope" value="Eukaryota"/>
</dbReference>
<dbReference type="GeneTree" id="ENSGT00390000010770"/>
<dbReference type="HOGENOM" id="CLU_069688_0_0_1"/>
<dbReference type="InParanoid" id="Q9V7D2"/>
<dbReference type="OMA" id="REEFFRM"/>
<dbReference type="OrthoDB" id="7676488at2759"/>
<dbReference type="PhylomeDB" id="Q9V7D2"/>
<dbReference type="Reactome" id="R-DME-1222556">
    <property type="pathway name" value="ROS and RNS production in phagocytes"/>
</dbReference>
<dbReference type="Reactome" id="R-DME-6798695">
    <property type="pathway name" value="Neutrophil degranulation"/>
</dbReference>
<dbReference type="Reactome" id="R-DME-77387">
    <property type="pathway name" value="Insulin receptor recycling"/>
</dbReference>
<dbReference type="Reactome" id="R-DME-917977">
    <property type="pathway name" value="Transferrin endocytosis and recycling"/>
</dbReference>
<dbReference type="Reactome" id="R-DME-9639288">
    <property type="pathway name" value="Amino acids regulate mTORC1"/>
</dbReference>
<dbReference type="Reactome" id="R-DME-983712">
    <property type="pathway name" value="Ion channel transport"/>
</dbReference>
<dbReference type="SignaLink" id="Q9V7D2"/>
<dbReference type="BioGRID-ORCS" id="44702">
    <property type="hits" value="0 hits in 1 CRISPR screen"/>
</dbReference>
<dbReference type="GenomeRNAi" id="44702"/>
<dbReference type="PRO" id="PR:Q9V7D2"/>
<dbReference type="Proteomes" id="UP000000803">
    <property type="component" value="Chromosome 2R"/>
</dbReference>
<dbReference type="Bgee" id="FBgn0022097">
    <property type="expression patterns" value="Expressed in adult CCAP neuron in brain and 260 other cell types or tissues"/>
</dbReference>
<dbReference type="GO" id="GO:0033181">
    <property type="term" value="C:plasma membrane proton-transporting V-type ATPase complex"/>
    <property type="evidence" value="ECO:0000315"/>
    <property type="project" value="FlyBase"/>
</dbReference>
<dbReference type="GO" id="GO:0033176">
    <property type="term" value="C:proton-transporting V-type ATPase complex"/>
    <property type="evidence" value="ECO:0000318"/>
    <property type="project" value="GO_Central"/>
</dbReference>
<dbReference type="GO" id="GO:0000221">
    <property type="term" value="C:vacuolar proton-transporting V-type ATPase, V1 domain"/>
    <property type="evidence" value="ECO:0000250"/>
    <property type="project" value="FlyBase"/>
</dbReference>
<dbReference type="GO" id="GO:0046961">
    <property type="term" value="F:proton-transporting ATPase activity, rotational mechanism"/>
    <property type="evidence" value="ECO:0007669"/>
    <property type="project" value="InterPro"/>
</dbReference>
<dbReference type="GO" id="GO:1902600">
    <property type="term" value="P:proton transmembrane transport"/>
    <property type="evidence" value="ECO:0000305"/>
    <property type="project" value="FlyBase"/>
</dbReference>
<dbReference type="FunFam" id="1.10.287.3240:FF:000001">
    <property type="entry name" value="V-type proton ATPase subunit D"/>
    <property type="match status" value="1"/>
</dbReference>
<dbReference type="Gene3D" id="1.10.287.3240">
    <property type="match status" value="1"/>
</dbReference>
<dbReference type="InterPro" id="IPR002699">
    <property type="entry name" value="V_ATPase_D"/>
</dbReference>
<dbReference type="NCBIfam" id="TIGR00309">
    <property type="entry name" value="V_ATPase_subD"/>
    <property type="match status" value="1"/>
</dbReference>
<dbReference type="PANTHER" id="PTHR11671">
    <property type="entry name" value="V-TYPE ATP SYNTHASE SUBUNIT D"/>
    <property type="match status" value="1"/>
</dbReference>
<dbReference type="Pfam" id="PF01813">
    <property type="entry name" value="ATP-synt_D"/>
    <property type="match status" value="1"/>
</dbReference>
<comment type="function">
    <text evidence="1 2">Subunit of the V1 complex of vacuolar(H+)-ATPase (V-ATPase), a multisubunit enzyme composed of a peripheral complex (V1) that hydrolyzes ATP and a membrane integral complex (V0) that translocates protons (By similarity). V-ATPase is responsible for acidifying and maintaining the pH of intracellular compartments and in some cell types, is targeted to the plasma membrane, where it is responsible for acidifying the extracellular environment (By similarity).</text>
</comment>
<comment type="subunit">
    <text evidence="2">V-ATPase is a heteromultimeric enzyme made up of two complexes: the ATP-hydrolytic V1 complex and the proton translocation V0 complex (By similarity). The V1 complex consists of three catalytic AB heterodimers that form a heterohexamer, three peripheral stalks each consisting of EG heterodimers, one central rotor including subunits D and F, and the regulatory subunits C and H (By similarity). The proton translocation complex V0 consists of the proton transport subunit a, a ring of proteolipid subunits c9c'', rotary subunit d, subunits e and f, and the accessory subunits VhaAC45 and ATP6AP2 (By similarity).</text>
</comment>
<comment type="interaction">
    <interactant intactId="EBI-158035">
        <id>Q9V7D2</id>
    </interactant>
    <interactant intactId="EBI-99679">
        <id>O97420</id>
        <label>CG14818</label>
    </interactant>
    <organismsDiffer>false</organismsDiffer>
    <experiments>3</experiments>
</comment>
<comment type="similarity">
    <text evidence="3">Belongs to the V-ATPase D subunit family.</text>
</comment>
<protein>
    <recommendedName>
        <fullName>V-type proton ATPase subunit D 1</fullName>
        <shortName>V-ATPase subunit D 1</shortName>
    </recommendedName>
    <alternativeName>
        <fullName>Vacuolar H+ ATPase subunit 36-1</fullName>
    </alternativeName>
    <alternativeName>
        <fullName>Vacuolar proton pump subunit D 1</fullName>
    </alternativeName>
    <alternativeName>
        <fullName>dV-ATPase D</fullName>
    </alternativeName>
</protein>
<reference key="1">
    <citation type="submission" date="1999-12" db="EMBL/GenBank/DDBJ databases">
        <title>Cloning of Drosophila vacuolar ATPase subunit D.</title>
        <authorList>
            <person name="Farkas R."/>
            <person name="Kucharova S."/>
            <person name="Mechler B.M."/>
        </authorList>
    </citation>
    <scope>NUCLEOTIDE SEQUENCE [MRNA]</scope>
</reference>
<reference key="2">
    <citation type="journal article" date="2000" name="Science">
        <title>The genome sequence of Drosophila melanogaster.</title>
        <authorList>
            <person name="Adams M.D."/>
            <person name="Celniker S.E."/>
            <person name="Holt R.A."/>
            <person name="Evans C.A."/>
            <person name="Gocayne J.D."/>
            <person name="Amanatides P.G."/>
            <person name="Scherer S.E."/>
            <person name="Li P.W."/>
            <person name="Hoskins R.A."/>
            <person name="Galle R.F."/>
            <person name="George R.A."/>
            <person name="Lewis S.E."/>
            <person name="Richards S."/>
            <person name="Ashburner M."/>
            <person name="Henderson S.N."/>
            <person name="Sutton G.G."/>
            <person name="Wortman J.R."/>
            <person name="Yandell M.D."/>
            <person name="Zhang Q."/>
            <person name="Chen L.X."/>
            <person name="Brandon R.C."/>
            <person name="Rogers Y.-H.C."/>
            <person name="Blazej R.G."/>
            <person name="Champe M."/>
            <person name="Pfeiffer B.D."/>
            <person name="Wan K.H."/>
            <person name="Doyle C."/>
            <person name="Baxter E.G."/>
            <person name="Helt G."/>
            <person name="Nelson C.R."/>
            <person name="Miklos G.L.G."/>
            <person name="Abril J.F."/>
            <person name="Agbayani A."/>
            <person name="An H.-J."/>
            <person name="Andrews-Pfannkoch C."/>
            <person name="Baldwin D."/>
            <person name="Ballew R.M."/>
            <person name="Basu A."/>
            <person name="Baxendale J."/>
            <person name="Bayraktaroglu L."/>
            <person name="Beasley E.M."/>
            <person name="Beeson K.Y."/>
            <person name="Benos P.V."/>
            <person name="Berman B.P."/>
            <person name="Bhandari D."/>
            <person name="Bolshakov S."/>
            <person name="Borkova D."/>
            <person name="Botchan M.R."/>
            <person name="Bouck J."/>
            <person name="Brokstein P."/>
            <person name="Brottier P."/>
            <person name="Burtis K.C."/>
            <person name="Busam D.A."/>
            <person name="Butler H."/>
            <person name="Cadieu E."/>
            <person name="Center A."/>
            <person name="Chandra I."/>
            <person name="Cherry J.M."/>
            <person name="Cawley S."/>
            <person name="Dahlke C."/>
            <person name="Davenport L.B."/>
            <person name="Davies P."/>
            <person name="de Pablos B."/>
            <person name="Delcher A."/>
            <person name="Deng Z."/>
            <person name="Mays A.D."/>
            <person name="Dew I."/>
            <person name="Dietz S.M."/>
            <person name="Dodson K."/>
            <person name="Doup L.E."/>
            <person name="Downes M."/>
            <person name="Dugan-Rocha S."/>
            <person name="Dunkov B.C."/>
            <person name="Dunn P."/>
            <person name="Durbin K.J."/>
            <person name="Evangelista C.C."/>
            <person name="Ferraz C."/>
            <person name="Ferriera S."/>
            <person name="Fleischmann W."/>
            <person name="Fosler C."/>
            <person name="Gabrielian A.E."/>
            <person name="Garg N.S."/>
            <person name="Gelbart W.M."/>
            <person name="Glasser K."/>
            <person name="Glodek A."/>
            <person name="Gong F."/>
            <person name="Gorrell J.H."/>
            <person name="Gu Z."/>
            <person name="Guan P."/>
            <person name="Harris M."/>
            <person name="Harris N.L."/>
            <person name="Harvey D.A."/>
            <person name="Heiman T.J."/>
            <person name="Hernandez J.R."/>
            <person name="Houck J."/>
            <person name="Hostin D."/>
            <person name="Houston K.A."/>
            <person name="Howland T.J."/>
            <person name="Wei M.-H."/>
            <person name="Ibegwam C."/>
            <person name="Jalali M."/>
            <person name="Kalush F."/>
            <person name="Karpen G.H."/>
            <person name="Ke Z."/>
            <person name="Kennison J.A."/>
            <person name="Ketchum K.A."/>
            <person name="Kimmel B.E."/>
            <person name="Kodira C.D."/>
            <person name="Kraft C.L."/>
            <person name="Kravitz S."/>
            <person name="Kulp D."/>
            <person name="Lai Z."/>
            <person name="Lasko P."/>
            <person name="Lei Y."/>
            <person name="Levitsky A.A."/>
            <person name="Li J.H."/>
            <person name="Li Z."/>
            <person name="Liang Y."/>
            <person name="Lin X."/>
            <person name="Liu X."/>
            <person name="Mattei B."/>
            <person name="McIntosh T.C."/>
            <person name="McLeod M.P."/>
            <person name="McPherson D."/>
            <person name="Merkulov G."/>
            <person name="Milshina N.V."/>
            <person name="Mobarry C."/>
            <person name="Morris J."/>
            <person name="Moshrefi A."/>
            <person name="Mount S.M."/>
            <person name="Moy M."/>
            <person name="Murphy B."/>
            <person name="Murphy L."/>
            <person name="Muzny D.M."/>
            <person name="Nelson D.L."/>
            <person name="Nelson D.R."/>
            <person name="Nelson K.A."/>
            <person name="Nixon K."/>
            <person name="Nusskern D.R."/>
            <person name="Pacleb J.M."/>
            <person name="Palazzolo M."/>
            <person name="Pittman G.S."/>
            <person name="Pan S."/>
            <person name="Pollard J."/>
            <person name="Puri V."/>
            <person name="Reese M.G."/>
            <person name="Reinert K."/>
            <person name="Remington K."/>
            <person name="Saunders R.D.C."/>
            <person name="Scheeler F."/>
            <person name="Shen H."/>
            <person name="Shue B.C."/>
            <person name="Siden-Kiamos I."/>
            <person name="Simpson M."/>
            <person name="Skupski M.P."/>
            <person name="Smith T.J."/>
            <person name="Spier E."/>
            <person name="Spradling A.C."/>
            <person name="Stapleton M."/>
            <person name="Strong R."/>
            <person name="Sun E."/>
            <person name="Svirskas R."/>
            <person name="Tector C."/>
            <person name="Turner R."/>
            <person name="Venter E."/>
            <person name="Wang A.H."/>
            <person name="Wang X."/>
            <person name="Wang Z.-Y."/>
            <person name="Wassarman D.A."/>
            <person name="Weinstock G.M."/>
            <person name="Weissenbach J."/>
            <person name="Williams S.M."/>
            <person name="Woodage T."/>
            <person name="Worley K.C."/>
            <person name="Wu D."/>
            <person name="Yang S."/>
            <person name="Yao Q.A."/>
            <person name="Ye J."/>
            <person name="Yeh R.-F."/>
            <person name="Zaveri J.S."/>
            <person name="Zhan M."/>
            <person name="Zhang G."/>
            <person name="Zhao Q."/>
            <person name="Zheng L."/>
            <person name="Zheng X.H."/>
            <person name="Zhong F.N."/>
            <person name="Zhong W."/>
            <person name="Zhou X."/>
            <person name="Zhu S.C."/>
            <person name="Zhu X."/>
            <person name="Smith H.O."/>
            <person name="Gibbs R.A."/>
            <person name="Myers E.W."/>
            <person name="Rubin G.M."/>
            <person name="Venter J.C."/>
        </authorList>
    </citation>
    <scope>NUCLEOTIDE SEQUENCE [LARGE SCALE GENOMIC DNA]</scope>
    <source>
        <strain>Berkeley</strain>
    </source>
</reference>
<reference key="3">
    <citation type="journal article" date="2002" name="Genome Biol.">
        <title>Annotation of the Drosophila melanogaster euchromatic genome: a systematic review.</title>
        <authorList>
            <person name="Misra S."/>
            <person name="Crosby M.A."/>
            <person name="Mungall C.J."/>
            <person name="Matthews B.B."/>
            <person name="Campbell K.S."/>
            <person name="Hradecky P."/>
            <person name="Huang Y."/>
            <person name="Kaminker J.S."/>
            <person name="Millburn G.H."/>
            <person name="Prochnik S.E."/>
            <person name="Smith C.D."/>
            <person name="Tupy J.L."/>
            <person name="Whitfield E.J."/>
            <person name="Bayraktaroglu L."/>
            <person name="Berman B.P."/>
            <person name="Bettencourt B.R."/>
            <person name="Celniker S.E."/>
            <person name="de Grey A.D.N.J."/>
            <person name="Drysdale R.A."/>
            <person name="Harris N.L."/>
            <person name="Richter J."/>
            <person name="Russo S."/>
            <person name="Schroeder A.J."/>
            <person name="Shu S.Q."/>
            <person name="Stapleton M."/>
            <person name="Yamada C."/>
            <person name="Ashburner M."/>
            <person name="Gelbart W.M."/>
            <person name="Rubin G.M."/>
            <person name="Lewis S.E."/>
        </authorList>
    </citation>
    <scope>GENOME REANNOTATION</scope>
    <source>
        <strain>Berkeley</strain>
    </source>
</reference>
<reference key="4">
    <citation type="journal article" date="2002" name="Genome Biol.">
        <title>A Drosophila full-length cDNA resource.</title>
        <authorList>
            <person name="Stapleton M."/>
            <person name="Carlson J.W."/>
            <person name="Brokstein P."/>
            <person name="Yu C."/>
            <person name="Champe M."/>
            <person name="George R.A."/>
            <person name="Guarin H."/>
            <person name="Kronmiller B."/>
            <person name="Pacleb J.M."/>
            <person name="Park S."/>
            <person name="Wan K.H."/>
            <person name="Rubin G.M."/>
            <person name="Celniker S.E."/>
        </authorList>
    </citation>
    <scope>NUCLEOTIDE SEQUENCE [LARGE SCALE MRNA]</scope>
    <source>
        <strain>Berkeley</strain>
        <tissue>Head</tissue>
    </source>
</reference>
<proteinExistence type="evidence at protein level"/>
<accession>Q9V7D2</accession>